<name>Y326_MYCGE</name>
<accession>P47568</accession>
<proteinExistence type="inferred from homology"/>
<evidence type="ECO:0000250" key="1"/>
<evidence type="ECO:0000250" key="2">
    <source>
        <dbReference type="UniProtKB" id="Q9X1H9"/>
    </source>
</evidence>
<evidence type="ECO:0000255" key="3">
    <source>
        <dbReference type="PROSITE-ProRule" id="PRU00815"/>
    </source>
</evidence>
<organism>
    <name type="scientific">Mycoplasma genitalium (strain ATCC 33530 / DSM 19775 / NCTC 10195 / G37)</name>
    <name type="common">Mycoplasmoides genitalium</name>
    <dbReference type="NCBI Taxonomy" id="243273"/>
    <lineage>
        <taxon>Bacteria</taxon>
        <taxon>Bacillati</taxon>
        <taxon>Mycoplasmatota</taxon>
        <taxon>Mycoplasmoidales</taxon>
        <taxon>Mycoplasmoidaceae</taxon>
        <taxon>Mycoplasmoides</taxon>
    </lineage>
</organism>
<reference key="1">
    <citation type="journal article" date="1995" name="Science">
        <title>The minimal gene complement of Mycoplasma genitalium.</title>
        <authorList>
            <person name="Fraser C.M."/>
            <person name="Gocayne J.D."/>
            <person name="White O."/>
            <person name="Adams M.D."/>
            <person name="Clayton R.A."/>
            <person name="Fleischmann R.D."/>
            <person name="Bult C.J."/>
            <person name="Kerlavage A.R."/>
            <person name="Sutton G.G."/>
            <person name="Kelley J.M."/>
            <person name="Fritchman J.L."/>
            <person name="Weidman J.F."/>
            <person name="Small K.V."/>
            <person name="Sandusky M."/>
            <person name="Fuhrmann J.L."/>
            <person name="Nguyen D.T."/>
            <person name="Utterback T.R."/>
            <person name="Saudek D.M."/>
            <person name="Phillips C.A."/>
            <person name="Merrick J.M."/>
            <person name="Tomb J.-F."/>
            <person name="Dougherty B.A."/>
            <person name="Bott K.F."/>
            <person name="Hu P.-C."/>
            <person name="Lucier T.S."/>
            <person name="Peterson S.N."/>
            <person name="Smith H.O."/>
            <person name="Hutchison C.A. III"/>
            <person name="Venter J.C."/>
        </authorList>
    </citation>
    <scope>NUCLEOTIDE SEQUENCE [LARGE SCALE GENOMIC DNA]</scope>
    <source>
        <strain>ATCC 33530 / DSM 19775 / NCTC 10195 / G37</strain>
    </source>
</reference>
<protein>
    <recommendedName>
        <fullName>DegV domain-containing protein MG326</fullName>
    </recommendedName>
</protein>
<keyword id="KW-0446">Lipid-binding</keyword>
<keyword id="KW-1185">Reference proteome</keyword>
<comment type="function">
    <text evidence="1">May bind long-chain fatty acids, such as palmitate, and may play a role in lipid transport or fatty acid metabolism.</text>
</comment>
<gene>
    <name type="ordered locus">MG326</name>
</gene>
<sequence>MKKTAIITDSTASIKPGEINGVYILPLQVIVDGEKSFRDGIEIDYDHVHKLLKENPHGLNISTSLPRQSDLLKIFEEIKTKYDRFIFLPLSKGLSGTYDMLVQLAKELSEQNKDKEFLVFETSDIAISLKWLVEDIKALVDKGCDNQTIKAKVESHKQNILSAVTLKNLVQMRKGGRISGLKKFITTLLRVKPIILFDKGVNTLGAKVFSFSQAVEKIFGFVKTKFGDNYKIKRIGFCYSFCKNYANEIKKIITDFIEHNKINFQNEIENAFITSVIIVHTGIDAFSISLLIDNK</sequence>
<feature type="chain" id="PRO_0000209772" description="DegV domain-containing protein MG326">
    <location>
        <begin position="1"/>
        <end position="295"/>
    </location>
</feature>
<feature type="domain" description="DegV" evidence="3">
    <location>
        <begin position="4"/>
        <end position="292"/>
    </location>
</feature>
<feature type="binding site" evidence="2">
    <location>
        <position position="63"/>
    </location>
    <ligand>
        <name>hexadecanoate</name>
        <dbReference type="ChEBI" id="CHEBI:7896"/>
    </ligand>
</feature>
<feature type="binding site" evidence="2">
    <location>
        <position position="95"/>
    </location>
    <ligand>
        <name>hexadecanoate</name>
        <dbReference type="ChEBI" id="CHEBI:7896"/>
    </ligand>
</feature>
<dbReference type="EMBL" id="L43967">
    <property type="protein sequence ID" value="AAC71550.1"/>
    <property type="molecule type" value="Genomic_DNA"/>
</dbReference>
<dbReference type="PIR" id="A64236">
    <property type="entry name" value="A64236"/>
</dbReference>
<dbReference type="RefSeq" id="WP_009885962.1">
    <property type="nucleotide sequence ID" value="NC_000908.2"/>
</dbReference>
<dbReference type="SMR" id="P47568"/>
<dbReference type="FunCoup" id="P47568">
    <property type="interactions" value="19"/>
</dbReference>
<dbReference type="STRING" id="243273.MG_326"/>
<dbReference type="GeneID" id="88282499"/>
<dbReference type="KEGG" id="mge:MG_326"/>
<dbReference type="eggNOG" id="COG1307">
    <property type="taxonomic scope" value="Bacteria"/>
</dbReference>
<dbReference type="HOGENOM" id="CLU_048251_3_0_14"/>
<dbReference type="InParanoid" id="P47568"/>
<dbReference type="OrthoDB" id="384457at2"/>
<dbReference type="BioCyc" id="MGEN243273:G1GJ2-408-MONOMER"/>
<dbReference type="Proteomes" id="UP000000807">
    <property type="component" value="Chromosome"/>
</dbReference>
<dbReference type="GO" id="GO:0008289">
    <property type="term" value="F:lipid binding"/>
    <property type="evidence" value="ECO:0007669"/>
    <property type="project" value="UniProtKB-KW"/>
</dbReference>
<dbReference type="Gene3D" id="3.30.1180.10">
    <property type="match status" value="1"/>
</dbReference>
<dbReference type="Gene3D" id="3.40.50.10170">
    <property type="match status" value="1"/>
</dbReference>
<dbReference type="InterPro" id="IPR003797">
    <property type="entry name" value="DegV"/>
</dbReference>
<dbReference type="InterPro" id="IPR043168">
    <property type="entry name" value="DegV_C"/>
</dbReference>
<dbReference type="InterPro" id="IPR050270">
    <property type="entry name" value="DegV_domain_contain"/>
</dbReference>
<dbReference type="NCBIfam" id="TIGR00762">
    <property type="entry name" value="DegV"/>
    <property type="match status" value="1"/>
</dbReference>
<dbReference type="PANTHER" id="PTHR33434">
    <property type="entry name" value="DEGV DOMAIN-CONTAINING PROTEIN DR_1986-RELATED"/>
    <property type="match status" value="1"/>
</dbReference>
<dbReference type="PANTHER" id="PTHR33434:SF2">
    <property type="entry name" value="FATTY ACID-BINDING PROTEIN TM_1468"/>
    <property type="match status" value="1"/>
</dbReference>
<dbReference type="Pfam" id="PF02645">
    <property type="entry name" value="DegV"/>
    <property type="match status" value="1"/>
</dbReference>
<dbReference type="SUPFAM" id="SSF82549">
    <property type="entry name" value="DAK1/DegV-like"/>
    <property type="match status" value="1"/>
</dbReference>
<dbReference type="PROSITE" id="PS51482">
    <property type="entry name" value="DEGV"/>
    <property type="match status" value="1"/>
</dbReference>